<name>ZN767_HUMAN</name>
<proteinExistence type="uncertain"/>
<keyword id="KW-0025">Alternative splicing</keyword>
<keyword id="KW-0175">Coiled coil</keyword>
<keyword id="KW-1185">Reference proteome</keyword>
<sequence>MEEAAAAPISPWTMAATIQAMERKIESQAAHLLSLEGQTGMAEKKLADCEKTAVEFGNQLEGKWAVLGTLLQEYGLLQRRLENVENLLHNRNFWILRLPPGSKGESPKTTPSPSPRSSPRLNKGRSPATGAALTPRFQMFLWTPVQMQKLRPSRD</sequence>
<accession>Q75MW2</accession>
<accession>D3DWG6</accession>
<accession>Q86WY4</accession>
<accession>Q9H9J3</accession>
<dbReference type="EMBL" id="AK022762">
    <property type="protein sequence ID" value="BAB14233.1"/>
    <property type="molecule type" value="mRNA"/>
</dbReference>
<dbReference type="EMBL" id="AC004932">
    <property type="protein sequence ID" value="AAQ96876.1"/>
    <property type="molecule type" value="Genomic_DNA"/>
</dbReference>
<dbReference type="EMBL" id="CH471146">
    <property type="protein sequence ID" value="EAW80038.1"/>
    <property type="molecule type" value="Genomic_DNA"/>
</dbReference>
<dbReference type="EMBL" id="CH471146">
    <property type="protein sequence ID" value="EAW80039.1"/>
    <property type="molecule type" value="Genomic_DNA"/>
</dbReference>
<dbReference type="EMBL" id="BC047675">
    <property type="protein sequence ID" value="AAH47675.1"/>
    <property type="molecule type" value="mRNA"/>
</dbReference>
<dbReference type="SMR" id="Q75MW2"/>
<dbReference type="IntAct" id="Q75MW2">
    <property type="interactions" value="9"/>
</dbReference>
<dbReference type="iPTMnet" id="Q75MW2"/>
<dbReference type="PhosphoSitePlus" id="Q75MW2"/>
<dbReference type="BioMuta" id="HGNC:21884"/>
<dbReference type="DMDM" id="74712880"/>
<dbReference type="jPOST" id="Q75MW2"/>
<dbReference type="MassIVE" id="Q75MW2"/>
<dbReference type="PeptideAtlas" id="Q75MW2"/>
<dbReference type="ProteomicsDB" id="68639">
    <molecule id="Q75MW2-1"/>
</dbReference>
<dbReference type="ProteomicsDB" id="68640">
    <molecule id="Q75MW2-2"/>
</dbReference>
<dbReference type="AGR" id="HGNC:21884"/>
<dbReference type="GeneCards" id="ZNF767P"/>
<dbReference type="HGNC" id="HGNC:21884">
    <property type="gene designation" value="ZNF767P"/>
</dbReference>
<dbReference type="neXtProt" id="NX_Q75MW2"/>
<dbReference type="InParanoid" id="Q75MW2"/>
<dbReference type="PAN-GO" id="Q75MW2">
    <property type="GO annotations" value="0 GO annotations based on evolutionary models"/>
</dbReference>
<dbReference type="PhylomeDB" id="Q75MW2"/>
<dbReference type="PathwayCommons" id="Q75MW2"/>
<dbReference type="Reactome" id="R-HSA-212436">
    <property type="pathway name" value="Generic Transcription Pathway"/>
</dbReference>
<dbReference type="ChiTaRS" id="ZNF767P">
    <property type="organism name" value="human"/>
</dbReference>
<dbReference type="Pharos" id="Q75MW2">
    <property type="development level" value="Tdark"/>
</dbReference>
<dbReference type="PRO" id="PR:Q75MW2"/>
<dbReference type="Proteomes" id="UP000005640">
    <property type="component" value="Unplaced"/>
</dbReference>
<dbReference type="RNAct" id="Q75MW2">
    <property type="molecule type" value="protein"/>
</dbReference>
<gene>
    <name type="primary">ZNF767P</name>
    <name type="synonym">ZNF767</name>
</gene>
<reference key="1">
    <citation type="journal article" date="2004" name="Nat. Genet.">
        <title>Complete sequencing and characterization of 21,243 full-length human cDNAs.</title>
        <authorList>
            <person name="Ota T."/>
            <person name="Suzuki Y."/>
            <person name="Nishikawa T."/>
            <person name="Otsuki T."/>
            <person name="Sugiyama T."/>
            <person name="Irie R."/>
            <person name="Wakamatsu A."/>
            <person name="Hayashi K."/>
            <person name="Sato H."/>
            <person name="Nagai K."/>
            <person name="Kimura K."/>
            <person name="Makita H."/>
            <person name="Sekine M."/>
            <person name="Obayashi M."/>
            <person name="Nishi T."/>
            <person name="Shibahara T."/>
            <person name="Tanaka T."/>
            <person name="Ishii S."/>
            <person name="Yamamoto J."/>
            <person name="Saito K."/>
            <person name="Kawai Y."/>
            <person name="Isono Y."/>
            <person name="Nakamura Y."/>
            <person name="Nagahari K."/>
            <person name="Murakami K."/>
            <person name="Yasuda T."/>
            <person name="Iwayanagi T."/>
            <person name="Wagatsuma M."/>
            <person name="Shiratori A."/>
            <person name="Sudo H."/>
            <person name="Hosoiri T."/>
            <person name="Kaku Y."/>
            <person name="Kodaira H."/>
            <person name="Kondo H."/>
            <person name="Sugawara M."/>
            <person name="Takahashi M."/>
            <person name="Kanda K."/>
            <person name="Yokoi T."/>
            <person name="Furuya T."/>
            <person name="Kikkawa E."/>
            <person name="Omura Y."/>
            <person name="Abe K."/>
            <person name="Kamihara K."/>
            <person name="Katsuta N."/>
            <person name="Sato K."/>
            <person name="Tanikawa M."/>
            <person name="Yamazaki M."/>
            <person name="Ninomiya K."/>
            <person name="Ishibashi T."/>
            <person name="Yamashita H."/>
            <person name="Murakawa K."/>
            <person name="Fujimori K."/>
            <person name="Tanai H."/>
            <person name="Kimata M."/>
            <person name="Watanabe M."/>
            <person name="Hiraoka S."/>
            <person name="Chiba Y."/>
            <person name="Ishida S."/>
            <person name="Ono Y."/>
            <person name="Takiguchi S."/>
            <person name="Watanabe S."/>
            <person name="Yosida M."/>
            <person name="Hotuta T."/>
            <person name="Kusano J."/>
            <person name="Kanehori K."/>
            <person name="Takahashi-Fujii A."/>
            <person name="Hara H."/>
            <person name="Tanase T.-O."/>
            <person name="Nomura Y."/>
            <person name="Togiya S."/>
            <person name="Komai F."/>
            <person name="Hara R."/>
            <person name="Takeuchi K."/>
            <person name="Arita M."/>
            <person name="Imose N."/>
            <person name="Musashino K."/>
            <person name="Yuuki H."/>
            <person name="Oshima A."/>
            <person name="Sasaki N."/>
            <person name="Aotsuka S."/>
            <person name="Yoshikawa Y."/>
            <person name="Matsunawa H."/>
            <person name="Ichihara T."/>
            <person name="Shiohata N."/>
            <person name="Sano S."/>
            <person name="Moriya S."/>
            <person name="Momiyama H."/>
            <person name="Satoh N."/>
            <person name="Takami S."/>
            <person name="Terashima Y."/>
            <person name="Suzuki O."/>
            <person name="Nakagawa S."/>
            <person name="Senoh A."/>
            <person name="Mizoguchi H."/>
            <person name="Goto Y."/>
            <person name="Shimizu F."/>
            <person name="Wakebe H."/>
            <person name="Hishigaki H."/>
            <person name="Watanabe T."/>
            <person name="Sugiyama A."/>
            <person name="Takemoto M."/>
            <person name="Kawakami B."/>
            <person name="Yamazaki M."/>
            <person name="Watanabe K."/>
            <person name="Kumagai A."/>
            <person name="Itakura S."/>
            <person name="Fukuzumi Y."/>
            <person name="Fujimori Y."/>
            <person name="Komiyama M."/>
            <person name="Tashiro H."/>
            <person name="Tanigami A."/>
            <person name="Fujiwara T."/>
            <person name="Ono T."/>
            <person name="Yamada K."/>
            <person name="Fujii Y."/>
            <person name="Ozaki K."/>
            <person name="Hirao M."/>
            <person name="Ohmori Y."/>
            <person name="Kawabata A."/>
            <person name="Hikiji T."/>
            <person name="Kobatake N."/>
            <person name="Inagaki H."/>
            <person name="Ikema Y."/>
            <person name="Okamoto S."/>
            <person name="Okitani R."/>
            <person name="Kawakami T."/>
            <person name="Noguchi S."/>
            <person name="Itoh T."/>
            <person name="Shigeta K."/>
            <person name="Senba T."/>
            <person name="Matsumura K."/>
            <person name="Nakajima Y."/>
            <person name="Mizuno T."/>
            <person name="Morinaga M."/>
            <person name="Sasaki M."/>
            <person name="Togashi T."/>
            <person name="Oyama M."/>
            <person name="Hata H."/>
            <person name="Watanabe M."/>
            <person name="Komatsu T."/>
            <person name="Mizushima-Sugano J."/>
            <person name="Satoh T."/>
            <person name="Shirai Y."/>
            <person name="Takahashi Y."/>
            <person name="Nakagawa K."/>
            <person name="Okumura K."/>
            <person name="Nagase T."/>
            <person name="Nomura N."/>
            <person name="Kikuchi H."/>
            <person name="Masuho Y."/>
            <person name="Yamashita R."/>
            <person name="Nakai K."/>
            <person name="Yada T."/>
            <person name="Nakamura Y."/>
            <person name="Ohara O."/>
            <person name="Isogai T."/>
            <person name="Sugano S."/>
        </authorList>
    </citation>
    <scope>NUCLEOTIDE SEQUENCE [LARGE SCALE MRNA] (ISOFORM 1)</scope>
</reference>
<reference key="2">
    <citation type="journal article" date="2003" name="Nature">
        <title>The DNA sequence of human chromosome 7.</title>
        <authorList>
            <person name="Hillier L.W."/>
            <person name="Fulton R.S."/>
            <person name="Fulton L.A."/>
            <person name="Graves T.A."/>
            <person name="Pepin K.H."/>
            <person name="Wagner-McPherson C."/>
            <person name="Layman D."/>
            <person name="Maas J."/>
            <person name="Jaeger S."/>
            <person name="Walker R."/>
            <person name="Wylie K."/>
            <person name="Sekhon M."/>
            <person name="Becker M.C."/>
            <person name="O'Laughlin M.D."/>
            <person name="Schaller M.E."/>
            <person name="Fewell G.A."/>
            <person name="Delehaunty K.D."/>
            <person name="Miner T.L."/>
            <person name="Nash W.E."/>
            <person name="Cordes M."/>
            <person name="Du H."/>
            <person name="Sun H."/>
            <person name="Edwards J."/>
            <person name="Bradshaw-Cordum H."/>
            <person name="Ali J."/>
            <person name="Andrews S."/>
            <person name="Isak A."/>
            <person name="Vanbrunt A."/>
            <person name="Nguyen C."/>
            <person name="Du F."/>
            <person name="Lamar B."/>
            <person name="Courtney L."/>
            <person name="Kalicki J."/>
            <person name="Ozersky P."/>
            <person name="Bielicki L."/>
            <person name="Scott K."/>
            <person name="Holmes A."/>
            <person name="Harkins R."/>
            <person name="Harris A."/>
            <person name="Strong C.M."/>
            <person name="Hou S."/>
            <person name="Tomlinson C."/>
            <person name="Dauphin-Kohlberg S."/>
            <person name="Kozlowicz-Reilly A."/>
            <person name="Leonard S."/>
            <person name="Rohlfing T."/>
            <person name="Rock S.M."/>
            <person name="Tin-Wollam A.-M."/>
            <person name="Abbott A."/>
            <person name="Minx P."/>
            <person name="Maupin R."/>
            <person name="Strowmatt C."/>
            <person name="Latreille P."/>
            <person name="Miller N."/>
            <person name="Johnson D."/>
            <person name="Murray J."/>
            <person name="Woessner J.P."/>
            <person name="Wendl M.C."/>
            <person name="Yang S.-P."/>
            <person name="Schultz B.R."/>
            <person name="Wallis J.W."/>
            <person name="Spieth J."/>
            <person name="Bieri T.A."/>
            <person name="Nelson J.O."/>
            <person name="Berkowicz N."/>
            <person name="Wohldmann P.E."/>
            <person name="Cook L.L."/>
            <person name="Hickenbotham M.T."/>
            <person name="Eldred J."/>
            <person name="Williams D."/>
            <person name="Bedell J.A."/>
            <person name="Mardis E.R."/>
            <person name="Clifton S.W."/>
            <person name="Chissoe S.L."/>
            <person name="Marra M.A."/>
            <person name="Raymond C."/>
            <person name="Haugen E."/>
            <person name="Gillett W."/>
            <person name="Zhou Y."/>
            <person name="James R."/>
            <person name="Phelps K."/>
            <person name="Iadanoto S."/>
            <person name="Bubb K."/>
            <person name="Simms E."/>
            <person name="Levy R."/>
            <person name="Clendenning J."/>
            <person name="Kaul R."/>
            <person name="Kent W.J."/>
            <person name="Furey T.S."/>
            <person name="Baertsch R.A."/>
            <person name="Brent M.R."/>
            <person name="Keibler E."/>
            <person name="Flicek P."/>
            <person name="Bork P."/>
            <person name="Suyama M."/>
            <person name="Bailey J.A."/>
            <person name="Portnoy M.E."/>
            <person name="Torrents D."/>
            <person name="Chinwalla A.T."/>
            <person name="Gish W.R."/>
            <person name="Eddy S.R."/>
            <person name="McPherson J.D."/>
            <person name="Olson M.V."/>
            <person name="Eichler E.E."/>
            <person name="Green E.D."/>
            <person name="Waterston R.H."/>
            <person name="Wilson R.K."/>
        </authorList>
    </citation>
    <scope>NUCLEOTIDE SEQUENCE [LARGE SCALE GENOMIC DNA]</scope>
</reference>
<reference key="3">
    <citation type="submission" date="2005-09" db="EMBL/GenBank/DDBJ databases">
        <authorList>
            <person name="Mural R.J."/>
            <person name="Istrail S."/>
            <person name="Sutton G.G."/>
            <person name="Florea L."/>
            <person name="Halpern A.L."/>
            <person name="Mobarry C.M."/>
            <person name="Lippert R."/>
            <person name="Walenz B."/>
            <person name="Shatkay H."/>
            <person name="Dew I."/>
            <person name="Miller J.R."/>
            <person name="Flanigan M.J."/>
            <person name="Edwards N.J."/>
            <person name="Bolanos R."/>
            <person name="Fasulo D."/>
            <person name="Halldorsson B.V."/>
            <person name="Hannenhalli S."/>
            <person name="Turner R."/>
            <person name="Yooseph S."/>
            <person name="Lu F."/>
            <person name="Nusskern D.R."/>
            <person name="Shue B.C."/>
            <person name="Zheng X.H."/>
            <person name="Zhong F."/>
            <person name="Delcher A.L."/>
            <person name="Huson D.H."/>
            <person name="Kravitz S.A."/>
            <person name="Mouchard L."/>
            <person name="Reinert K."/>
            <person name="Remington K.A."/>
            <person name="Clark A.G."/>
            <person name="Waterman M.S."/>
            <person name="Eichler E.E."/>
            <person name="Adams M.D."/>
            <person name="Hunkapiller M.W."/>
            <person name="Myers E.W."/>
            <person name="Venter J.C."/>
        </authorList>
    </citation>
    <scope>NUCLEOTIDE SEQUENCE [LARGE SCALE GENOMIC DNA]</scope>
</reference>
<reference key="4">
    <citation type="journal article" date="2004" name="Genome Res.">
        <title>The status, quality, and expansion of the NIH full-length cDNA project: the Mammalian Gene Collection (MGC).</title>
        <authorList>
            <consortium name="The MGC Project Team"/>
        </authorList>
    </citation>
    <scope>NUCLEOTIDE SEQUENCE [LARGE SCALE MRNA] (ISOFORM 2)</scope>
    <source>
        <tissue>Brain</tissue>
    </source>
</reference>
<feature type="chain" id="PRO_0000280456" description="Protein ZNF767">
    <location>
        <begin position="1"/>
        <end position="155"/>
    </location>
</feature>
<feature type="region of interest" description="Disordered" evidence="2">
    <location>
        <begin position="98"/>
        <end position="132"/>
    </location>
</feature>
<feature type="coiled-coil region" evidence="1">
    <location>
        <begin position="16"/>
        <end position="92"/>
    </location>
</feature>
<feature type="splice variant" id="VSP_023681" description="In isoform 2." evidence="3">
    <original>TTPSPSPRSSPRLNKGRSPATGAALTPRFQMFLWTPVQMQKLRPSRD</original>
    <variation>VPMTFDDVAV</variation>
    <location>
        <begin position="109"/>
        <end position="155"/>
    </location>
</feature>
<feature type="sequence variant" id="VAR_057034" description="In dbSNP:rs1723718.">
    <original>H</original>
    <variation>R</variation>
    <location>
        <position position="31"/>
    </location>
</feature>
<feature type="sequence variant" id="VAR_057035" description="In dbSNP:rs1723719.">
    <original>Q</original>
    <variation>R</variation>
    <location>
        <position position="38"/>
    </location>
</feature>
<feature type="sequence variant" id="VAR_057036" description="In dbSNP:rs1808231.">
    <original>A</original>
    <variation>T</variation>
    <location>
        <position position="131"/>
    </location>
</feature>
<feature type="sequence variant" id="VAR_057037" description="In dbSNP:rs354055.">
    <original>T</original>
    <variation>A</variation>
    <location>
        <position position="134"/>
    </location>
</feature>
<feature type="sequence conflict" description="In Ref. 4; AAH47675." evidence="4" ref="4">
    <original>A</original>
    <variation>V</variation>
    <location>
        <position position="5"/>
    </location>
</feature>
<feature type="sequence conflict" description="In Ref. 4; AAH47675." evidence="4" ref="4">
    <original>H</original>
    <variation>R</variation>
    <location>
        <position position="89"/>
    </location>
</feature>
<feature type="sequence conflict" description="In Ref. 1; BAB14233." evidence="4" ref="1">
    <original>F</original>
    <variation>L</variation>
    <location>
        <position position="93"/>
    </location>
</feature>
<organism>
    <name type="scientific">Homo sapiens</name>
    <name type="common">Human</name>
    <dbReference type="NCBI Taxonomy" id="9606"/>
    <lineage>
        <taxon>Eukaryota</taxon>
        <taxon>Metazoa</taxon>
        <taxon>Chordata</taxon>
        <taxon>Craniata</taxon>
        <taxon>Vertebrata</taxon>
        <taxon>Euteleostomi</taxon>
        <taxon>Mammalia</taxon>
        <taxon>Eutheria</taxon>
        <taxon>Euarchontoglires</taxon>
        <taxon>Primates</taxon>
        <taxon>Haplorrhini</taxon>
        <taxon>Catarrhini</taxon>
        <taxon>Hominidae</taxon>
        <taxon>Homo</taxon>
    </lineage>
</organism>
<evidence type="ECO:0000255" key="1"/>
<evidence type="ECO:0000256" key="2">
    <source>
        <dbReference type="SAM" id="MobiDB-lite"/>
    </source>
</evidence>
<evidence type="ECO:0000303" key="3">
    <source>
    </source>
</evidence>
<evidence type="ECO:0000305" key="4"/>
<comment type="alternative products">
    <event type="alternative splicing"/>
    <isoform>
        <id>Q75MW2-1</id>
        <name>1</name>
        <sequence type="displayed"/>
    </isoform>
    <isoform>
        <id>Q75MW2-2</id>
        <name>2</name>
        <sequence type="described" ref="VSP_023681"/>
    </isoform>
</comment>
<comment type="caution">
    <text evidence="4">Could be the product of a pseudogene. Despite its name, it does not contain a canonical C2H2-type zinc-finger and in contrast to other members of the krueppel C2H2-type zinc-finger protein family, it is much shorter and lacks the C-terminus part.</text>
</comment>
<protein>
    <recommendedName>
        <fullName>Protein ZNF767</fullName>
    </recommendedName>
    <alternativeName>
        <fullName>Zinc finger protein 767 pseudogene</fullName>
    </alternativeName>
</protein>